<accession>A6QQ85</accession>
<evidence type="ECO:0000250" key="1">
    <source>
        <dbReference type="UniProtKB" id="B0FP48"/>
    </source>
</evidence>
<evidence type="ECO:0000255" key="2"/>
<evidence type="ECO:0000305" key="3"/>
<proteinExistence type="evidence at transcript level"/>
<comment type="subcellular location">
    <subcellularLocation>
        <location evidence="3">Membrane</location>
        <topology evidence="3">Single-pass type I membrane protein</topology>
    </subcellularLocation>
</comment>
<comment type="similarity">
    <text evidence="3">Belongs to the uroplakin-3 family.</text>
</comment>
<comment type="sequence caution" evidence="3">
    <conflict type="erroneous initiation">
        <sequence resource="EMBL-CDS" id="AAI49699"/>
    </conflict>
    <text>Extended N-terminus.</text>
</comment>
<sequence>MGLGRGQSPLLMALLLLLACLQMGMSLERISYVPQLSSATLAGRLTQSTFTLEQPRGQFSHPSISDSDAIWLVVAHSNATQKFTAPQKVEDTPVPADFPQRGYYLTLRASRALYPGGPPSNQLRVLRVGNDTRCSPRTRGCNRPLPGPGPYRVKFLVMSDRGPMAETEWSSETRLQQAEVLQAAPGPQTAGTVVIIAILSVLLAVLLAALLALLIFTWYDTCGSTPISGPGELVFVRKYDTHHMSRPSTVGGS</sequence>
<reference key="1">
    <citation type="submission" date="2007-07" db="EMBL/GenBank/DDBJ databases">
        <authorList>
            <consortium name="NIH - Mammalian Gene Collection (MGC) project"/>
        </authorList>
    </citation>
    <scope>NUCLEOTIDE SEQUENCE [LARGE SCALE MRNA]</scope>
    <source>
        <strain>Hereford</strain>
        <tissue>Thymus</tissue>
    </source>
</reference>
<feature type="signal peptide" evidence="2">
    <location>
        <begin position="1"/>
        <end position="26"/>
    </location>
</feature>
<feature type="chain" id="PRO_0000376012" description="Uroplakin-3b-like protein 1">
    <location>
        <begin position="27"/>
        <end position="253"/>
    </location>
</feature>
<feature type="topological domain" description="Extracellular" evidence="2">
    <location>
        <begin position="27"/>
        <end position="194"/>
    </location>
</feature>
<feature type="transmembrane region" description="Helical" evidence="2">
    <location>
        <begin position="195"/>
        <end position="215"/>
    </location>
</feature>
<feature type="topological domain" description="Cytoplasmic" evidence="2">
    <location>
        <begin position="216"/>
        <end position="253"/>
    </location>
</feature>
<feature type="glycosylation site" description="N-linked (GlcNAc...) asparagine" evidence="2">
    <location>
        <position position="78"/>
    </location>
</feature>
<feature type="glycosylation site" description="N-linked (GlcNAc...) asparagine" evidence="2">
    <location>
        <position position="130"/>
    </location>
</feature>
<gene>
    <name evidence="1" type="primary">UPK3BL1</name>
</gene>
<organism>
    <name type="scientific">Bos taurus</name>
    <name type="common">Bovine</name>
    <dbReference type="NCBI Taxonomy" id="9913"/>
    <lineage>
        <taxon>Eukaryota</taxon>
        <taxon>Metazoa</taxon>
        <taxon>Chordata</taxon>
        <taxon>Craniata</taxon>
        <taxon>Vertebrata</taxon>
        <taxon>Euteleostomi</taxon>
        <taxon>Mammalia</taxon>
        <taxon>Eutheria</taxon>
        <taxon>Laurasiatheria</taxon>
        <taxon>Artiodactyla</taxon>
        <taxon>Ruminantia</taxon>
        <taxon>Pecora</taxon>
        <taxon>Bovidae</taxon>
        <taxon>Bovinae</taxon>
        <taxon>Bos</taxon>
    </lineage>
</organism>
<dbReference type="EMBL" id="BC149698">
    <property type="protein sequence ID" value="AAI49699.1"/>
    <property type="status" value="ALT_INIT"/>
    <property type="molecule type" value="mRNA"/>
</dbReference>
<dbReference type="SMR" id="A6QQ85"/>
<dbReference type="FunCoup" id="A6QQ85">
    <property type="interactions" value="2"/>
</dbReference>
<dbReference type="STRING" id="9913.ENSBTAP00000027343"/>
<dbReference type="GlyCosmos" id="A6QQ85">
    <property type="glycosylation" value="2 sites, No reported glycans"/>
</dbReference>
<dbReference type="GlyGen" id="A6QQ85">
    <property type="glycosylation" value="2 sites"/>
</dbReference>
<dbReference type="PaxDb" id="9913-ENSBTAP00000027343"/>
<dbReference type="Ensembl" id="ENSBTAT00000027343.7">
    <property type="protein sequence ID" value="ENSBTAP00000027343.6"/>
    <property type="gene ID" value="ENSBTAG00000020524.7"/>
</dbReference>
<dbReference type="VEuPathDB" id="HostDB:ENSBTAG00000020524"/>
<dbReference type="eggNOG" id="ENOG502S22J">
    <property type="taxonomic scope" value="Eukaryota"/>
</dbReference>
<dbReference type="GeneTree" id="ENSGT00940000153392"/>
<dbReference type="InParanoid" id="A6QQ85"/>
<dbReference type="OMA" id="IYTCYDT"/>
<dbReference type="OrthoDB" id="9939598at2759"/>
<dbReference type="Proteomes" id="UP000009136">
    <property type="component" value="Chromosome 25"/>
</dbReference>
<dbReference type="Bgee" id="ENSBTAG00000020524">
    <property type="expression patterns" value="Expressed in uterine cervix and 49 other cell types or tissues"/>
</dbReference>
<dbReference type="GO" id="GO:0016020">
    <property type="term" value="C:membrane"/>
    <property type="evidence" value="ECO:0000318"/>
    <property type="project" value="GO_Central"/>
</dbReference>
<dbReference type="CDD" id="cd09969">
    <property type="entry name" value="UP_IIIb"/>
    <property type="match status" value="1"/>
</dbReference>
<dbReference type="InterPro" id="IPR024831">
    <property type="entry name" value="Uroplakin-3"/>
</dbReference>
<dbReference type="PANTHER" id="PTHR15446">
    <property type="entry name" value="UROPLAKIN III"/>
    <property type="match status" value="1"/>
</dbReference>
<dbReference type="PANTHER" id="PTHR15446:SF2">
    <property type="entry name" value="UROPLAKIN-3B-LIKE PROTEIN 1-RELATED"/>
    <property type="match status" value="1"/>
</dbReference>
<name>UPK3L_BOVIN</name>
<keyword id="KW-0325">Glycoprotein</keyword>
<keyword id="KW-0472">Membrane</keyword>
<keyword id="KW-1185">Reference proteome</keyword>
<keyword id="KW-0732">Signal</keyword>
<keyword id="KW-0812">Transmembrane</keyword>
<keyword id="KW-1133">Transmembrane helix</keyword>
<protein>
    <recommendedName>
        <fullName evidence="1">Uroplakin-3b-like protein 1</fullName>
    </recommendedName>
</protein>